<accession>A7Z5M8</accession>
<sequence length="232" mass="25459">MSVHINAEKGQIADTVLLPGDPLRAKFIAETYLENVECYNEVRGMYGFTGTYNGKKVSVQGTGMGVPSISIYVNELIQSYDVQNLIRVGSCGAIRNDVKVRDVILAMTSSTDSQMNRVAFGSVDYAPCADFELLNKAYQEAQKNNLPVAVGSVFTADQFYNEDSQIEKLARYGVLGVEMETTALYTLAAKYGKKALSILTVSDHVLTGEETTAEERQTTFHDMIKLALHTVS</sequence>
<dbReference type="EC" id="2.4.2.1" evidence="2"/>
<dbReference type="EMBL" id="CP000560">
    <property type="protein sequence ID" value="ABS74304.1"/>
    <property type="molecule type" value="Genomic_DNA"/>
</dbReference>
<dbReference type="RefSeq" id="WP_012117768.1">
    <property type="nucleotide sequence ID" value="NC_009725.2"/>
</dbReference>
<dbReference type="SMR" id="A7Z5M8"/>
<dbReference type="GeneID" id="93081072"/>
<dbReference type="KEGG" id="bay:RBAM_019420"/>
<dbReference type="HOGENOM" id="CLU_068457_2_0_9"/>
<dbReference type="Proteomes" id="UP000001120">
    <property type="component" value="Chromosome"/>
</dbReference>
<dbReference type="GO" id="GO:0005829">
    <property type="term" value="C:cytosol"/>
    <property type="evidence" value="ECO:0007669"/>
    <property type="project" value="TreeGrafter"/>
</dbReference>
<dbReference type="GO" id="GO:0004731">
    <property type="term" value="F:purine-nucleoside phosphorylase activity"/>
    <property type="evidence" value="ECO:0007669"/>
    <property type="project" value="UniProtKB-UniRule"/>
</dbReference>
<dbReference type="GO" id="GO:0006152">
    <property type="term" value="P:purine nucleoside catabolic process"/>
    <property type="evidence" value="ECO:0007669"/>
    <property type="project" value="TreeGrafter"/>
</dbReference>
<dbReference type="CDD" id="cd09006">
    <property type="entry name" value="PNP_EcPNPI-like"/>
    <property type="match status" value="1"/>
</dbReference>
<dbReference type="Gene3D" id="3.40.50.1580">
    <property type="entry name" value="Nucleoside phosphorylase domain"/>
    <property type="match status" value="1"/>
</dbReference>
<dbReference type="HAMAP" id="MF_01627">
    <property type="entry name" value="Pur_nucleosid_phosp"/>
    <property type="match status" value="1"/>
</dbReference>
<dbReference type="InterPro" id="IPR004402">
    <property type="entry name" value="DeoD-type"/>
</dbReference>
<dbReference type="InterPro" id="IPR018016">
    <property type="entry name" value="Nucleoside_phosphorylase_CS"/>
</dbReference>
<dbReference type="InterPro" id="IPR000845">
    <property type="entry name" value="Nucleoside_phosphorylase_d"/>
</dbReference>
<dbReference type="InterPro" id="IPR035994">
    <property type="entry name" value="Nucleoside_phosphorylase_sf"/>
</dbReference>
<dbReference type="NCBIfam" id="TIGR00107">
    <property type="entry name" value="deoD"/>
    <property type="match status" value="1"/>
</dbReference>
<dbReference type="NCBIfam" id="NF004489">
    <property type="entry name" value="PRK05819.1"/>
    <property type="match status" value="1"/>
</dbReference>
<dbReference type="NCBIfam" id="NF009914">
    <property type="entry name" value="PRK13374.1"/>
    <property type="match status" value="1"/>
</dbReference>
<dbReference type="PANTHER" id="PTHR43691:SF11">
    <property type="entry name" value="FI09636P-RELATED"/>
    <property type="match status" value="1"/>
</dbReference>
<dbReference type="PANTHER" id="PTHR43691">
    <property type="entry name" value="URIDINE PHOSPHORYLASE"/>
    <property type="match status" value="1"/>
</dbReference>
<dbReference type="Pfam" id="PF01048">
    <property type="entry name" value="PNP_UDP_1"/>
    <property type="match status" value="1"/>
</dbReference>
<dbReference type="SUPFAM" id="SSF53167">
    <property type="entry name" value="Purine and uridine phosphorylases"/>
    <property type="match status" value="1"/>
</dbReference>
<dbReference type="PROSITE" id="PS01232">
    <property type="entry name" value="PNP_UDP_1"/>
    <property type="match status" value="1"/>
</dbReference>
<name>DEOD_BACVZ</name>
<proteinExistence type="inferred from homology"/>
<keyword id="KW-0328">Glycosyltransferase</keyword>
<keyword id="KW-0808">Transferase</keyword>
<reference key="1">
    <citation type="journal article" date="2007" name="Nat. Biotechnol.">
        <title>Comparative analysis of the complete genome sequence of the plant growth-promoting bacterium Bacillus amyloliquefaciens FZB42.</title>
        <authorList>
            <person name="Chen X.H."/>
            <person name="Koumoutsi A."/>
            <person name="Scholz R."/>
            <person name="Eisenreich A."/>
            <person name="Schneider K."/>
            <person name="Heinemeyer I."/>
            <person name="Morgenstern B."/>
            <person name="Voss B."/>
            <person name="Hess W.R."/>
            <person name="Reva O."/>
            <person name="Junge H."/>
            <person name="Voigt B."/>
            <person name="Jungblut P.R."/>
            <person name="Vater J."/>
            <person name="Suessmuth R."/>
            <person name="Liesegang H."/>
            <person name="Strittmatter A."/>
            <person name="Gottschalk G."/>
            <person name="Borriss R."/>
        </authorList>
    </citation>
    <scope>NUCLEOTIDE SEQUENCE [LARGE SCALE GENOMIC DNA]</scope>
    <source>
        <strain>DSM 23117 / BGSC 10A6 / LMG 26770 / FZB42</strain>
    </source>
</reference>
<evidence type="ECO:0000250" key="1">
    <source>
        <dbReference type="UniProtKB" id="P50389"/>
    </source>
</evidence>
<evidence type="ECO:0000255" key="2">
    <source>
        <dbReference type="HAMAP-Rule" id="MF_01627"/>
    </source>
</evidence>
<protein>
    <recommendedName>
        <fullName evidence="2">Purine nucleoside phosphorylase DeoD-type</fullName>
        <shortName evidence="2">PNP</shortName>
        <ecNumber evidence="2">2.4.2.1</ecNumber>
    </recommendedName>
</protein>
<feature type="chain" id="PRO_1000069618" description="Purine nucleoside phosphorylase DeoD-type">
    <location>
        <begin position="1"/>
        <end position="232"/>
    </location>
</feature>
<feature type="active site" description="Proton donor" evidence="2">
    <location>
        <position position="203"/>
    </location>
</feature>
<feature type="binding site" evidence="1">
    <location>
        <position position="4"/>
    </location>
    <ligand>
        <name>a purine D-ribonucleoside</name>
        <dbReference type="ChEBI" id="CHEBI:142355"/>
        <note>ligand shared between dimeric partners</note>
    </ligand>
</feature>
<feature type="binding site" description="in other chain" evidence="1">
    <location>
        <position position="20"/>
    </location>
    <ligand>
        <name>phosphate</name>
        <dbReference type="ChEBI" id="CHEBI:43474"/>
        <note>ligand shared between dimeric partners</note>
    </ligand>
</feature>
<feature type="binding site" description="in other chain" evidence="1">
    <location>
        <position position="24"/>
    </location>
    <ligand>
        <name>phosphate</name>
        <dbReference type="ChEBI" id="CHEBI:43474"/>
        <note>ligand shared between dimeric partners</note>
    </ligand>
</feature>
<feature type="binding site" evidence="1">
    <location>
        <position position="43"/>
    </location>
    <ligand>
        <name>phosphate</name>
        <dbReference type="ChEBI" id="CHEBI:43474"/>
        <note>ligand shared between dimeric partners</note>
    </ligand>
</feature>
<feature type="binding site" description="in other chain" evidence="1">
    <location>
        <begin position="87"/>
        <end position="90"/>
    </location>
    <ligand>
        <name>phosphate</name>
        <dbReference type="ChEBI" id="CHEBI:43474"/>
        <note>ligand shared between dimeric partners</note>
    </ligand>
</feature>
<feature type="binding site" description="in other chain" evidence="1">
    <location>
        <position position="162"/>
    </location>
    <ligand>
        <name>a purine D-ribonucleoside</name>
        <dbReference type="ChEBI" id="CHEBI:142355"/>
        <note>ligand shared between dimeric partners</note>
    </ligand>
</feature>
<feature type="binding site" description="in other chain" evidence="1">
    <location>
        <begin position="178"/>
        <end position="180"/>
    </location>
    <ligand>
        <name>a purine D-ribonucleoside</name>
        <dbReference type="ChEBI" id="CHEBI:142355"/>
        <note>ligand shared between dimeric partners</note>
    </ligand>
</feature>
<feature type="binding site" description="in other chain" evidence="1">
    <location>
        <begin position="202"/>
        <end position="203"/>
    </location>
    <ligand>
        <name>a purine D-ribonucleoside</name>
        <dbReference type="ChEBI" id="CHEBI:142355"/>
        <note>ligand shared between dimeric partners</note>
    </ligand>
</feature>
<feature type="site" description="Important for catalytic activity" evidence="2">
    <location>
        <position position="216"/>
    </location>
</feature>
<comment type="function">
    <text evidence="2">Catalyzes the reversible phosphorolytic breakdown of the N-glycosidic bond in the beta-(deoxy)ribonucleoside molecules, with the formation of the corresponding free purine bases and pentose-1-phosphate.</text>
</comment>
<comment type="catalytic activity">
    <reaction evidence="2">
        <text>a purine D-ribonucleoside + phosphate = a purine nucleobase + alpha-D-ribose 1-phosphate</text>
        <dbReference type="Rhea" id="RHEA:19805"/>
        <dbReference type="ChEBI" id="CHEBI:26386"/>
        <dbReference type="ChEBI" id="CHEBI:43474"/>
        <dbReference type="ChEBI" id="CHEBI:57720"/>
        <dbReference type="ChEBI" id="CHEBI:142355"/>
        <dbReference type="EC" id="2.4.2.1"/>
    </reaction>
</comment>
<comment type="catalytic activity">
    <reaction evidence="2">
        <text>a purine 2'-deoxy-D-ribonucleoside + phosphate = a purine nucleobase + 2-deoxy-alpha-D-ribose 1-phosphate</text>
        <dbReference type="Rhea" id="RHEA:36431"/>
        <dbReference type="ChEBI" id="CHEBI:26386"/>
        <dbReference type="ChEBI" id="CHEBI:43474"/>
        <dbReference type="ChEBI" id="CHEBI:57259"/>
        <dbReference type="ChEBI" id="CHEBI:142361"/>
        <dbReference type="EC" id="2.4.2.1"/>
    </reaction>
</comment>
<comment type="subunit">
    <text evidence="2">Homohexamer; trimer of homodimers.</text>
</comment>
<comment type="similarity">
    <text evidence="2">Belongs to the PNP/UDP phosphorylase family.</text>
</comment>
<gene>
    <name evidence="2" type="primary">deoD</name>
    <name type="ordered locus">RBAM_019420</name>
</gene>
<organism>
    <name type="scientific">Bacillus velezensis (strain DSM 23117 / BGSC 10A6 / LMG 26770 / FZB42)</name>
    <name type="common">Bacillus amyloliquefaciens subsp. plantarum</name>
    <dbReference type="NCBI Taxonomy" id="326423"/>
    <lineage>
        <taxon>Bacteria</taxon>
        <taxon>Bacillati</taxon>
        <taxon>Bacillota</taxon>
        <taxon>Bacilli</taxon>
        <taxon>Bacillales</taxon>
        <taxon>Bacillaceae</taxon>
        <taxon>Bacillus</taxon>
        <taxon>Bacillus amyloliquefaciens group</taxon>
    </lineage>
</organism>